<evidence type="ECO:0000250" key="1"/>
<evidence type="ECO:0000250" key="2">
    <source>
        <dbReference type="UniProtKB" id="P06296"/>
    </source>
</evidence>
<evidence type="ECO:0000250" key="3">
    <source>
        <dbReference type="UniProtKB" id="P06850"/>
    </source>
</evidence>
<evidence type="ECO:0000250" key="4">
    <source>
        <dbReference type="UniProtKB" id="Q8CIT0"/>
    </source>
</evidence>
<evidence type="ECO:0000255" key="5"/>
<evidence type="ECO:0000256" key="6">
    <source>
        <dbReference type="SAM" id="MobiDB-lite"/>
    </source>
</evidence>
<evidence type="ECO:0000269" key="7">
    <source>
    </source>
</evidence>
<evidence type="ECO:0000305" key="8"/>
<proteinExistence type="evidence at transcript level"/>
<gene>
    <name type="primary">CRH</name>
</gene>
<protein>
    <recommendedName>
        <fullName>Corticoliberin</fullName>
    </recommendedName>
    <alternativeName>
        <fullName>Corticotropin-releasing factor</fullName>
        <shortName>CRF</shortName>
    </alternativeName>
    <alternativeName>
        <fullName>Corticotropin-releasing hormone</fullName>
    </alternativeName>
</protein>
<comment type="function">
    <text evidence="2 4">Hormone regulating the release of corticotropin from pituitary gland (By similarity). Induces NLRP6 in intestinal epithelial cells, hence may influence gut microbiota profile (By similarity).</text>
</comment>
<comment type="subunit">
    <text evidence="3">Interacts (via C-terminus) with CRFR1 (via N-terminal extracellular domain).</text>
</comment>
<comment type="subcellular location">
    <subcellularLocation>
        <location evidence="2">Secreted</location>
    </subcellularLocation>
</comment>
<comment type="tissue specificity">
    <text evidence="8">Produced by the hypothalamus.</text>
</comment>
<comment type="similarity">
    <text evidence="8">Belongs to the sauvagine/corticotropin-releasing factor/urotensin I family.</text>
</comment>
<dbReference type="EMBL" id="AF340152">
    <property type="protein sequence ID" value="AAK83231.1"/>
    <property type="molecule type" value="Genomic_DNA"/>
</dbReference>
<dbReference type="EMBL" id="BC147872">
    <property type="protein sequence ID" value="AAI47873.1"/>
    <property type="molecule type" value="mRNA"/>
</dbReference>
<dbReference type="RefSeq" id="NP_001013418.2">
    <property type="nucleotide sequence ID" value="NM_001013400.2"/>
</dbReference>
<dbReference type="RefSeq" id="XP_005215511.1">
    <property type="nucleotide sequence ID" value="XM_005215454.3"/>
</dbReference>
<dbReference type="FunCoup" id="Q95MI6">
    <property type="interactions" value="259"/>
</dbReference>
<dbReference type="STRING" id="9913.ENSBTAP00000044298"/>
<dbReference type="PaxDb" id="9913-ENSBTAP00000044298"/>
<dbReference type="Ensembl" id="ENSBTAT00000120052.1">
    <property type="protein sequence ID" value="ENSBTAP00000097170.1"/>
    <property type="gene ID" value="ENSBTAG00000033128.4"/>
</dbReference>
<dbReference type="Ensembl" id="ENSBTAT00000124790.1">
    <property type="protein sequence ID" value="ENSBTAP00000087004.1"/>
    <property type="gene ID" value="ENSBTAG00000033128.4"/>
</dbReference>
<dbReference type="GeneID" id="280755"/>
<dbReference type="KEGG" id="bta:280755"/>
<dbReference type="CTD" id="1392"/>
<dbReference type="VEuPathDB" id="HostDB:ENSBTAG00000033128"/>
<dbReference type="VGNC" id="VGNC:27707">
    <property type="gene designation" value="CRH"/>
</dbReference>
<dbReference type="eggNOG" id="ENOG502S25G">
    <property type="taxonomic scope" value="Eukaryota"/>
</dbReference>
<dbReference type="GeneTree" id="ENSGT00940000154473"/>
<dbReference type="HOGENOM" id="CLU_136288_0_0_1"/>
<dbReference type="InParanoid" id="Q95MI6"/>
<dbReference type="OMA" id="QHFQERS"/>
<dbReference type="OrthoDB" id="9837731at2759"/>
<dbReference type="TreeFam" id="TF332956"/>
<dbReference type="Reactome" id="R-BTA-373080">
    <property type="pathway name" value="Class B/2 (Secretin family receptors)"/>
</dbReference>
<dbReference type="Reactome" id="R-BTA-418555">
    <property type="pathway name" value="G alpha (s) signalling events"/>
</dbReference>
<dbReference type="Proteomes" id="UP000009136">
    <property type="component" value="Chromosome 14"/>
</dbReference>
<dbReference type="Bgee" id="ENSBTAG00000033128">
    <property type="expression patterns" value="Expressed in oocyte and 15 other cell types or tissues"/>
</dbReference>
<dbReference type="GO" id="GO:0005615">
    <property type="term" value="C:extracellular space"/>
    <property type="evidence" value="ECO:0000318"/>
    <property type="project" value="GO_Central"/>
</dbReference>
<dbReference type="GO" id="GO:0017045">
    <property type="term" value="F:corticotropin-releasing hormone activity"/>
    <property type="evidence" value="ECO:0000318"/>
    <property type="project" value="GO_Central"/>
</dbReference>
<dbReference type="GO" id="GO:0032811">
    <property type="term" value="P:negative regulation of epinephrine secretion"/>
    <property type="evidence" value="ECO:0000318"/>
    <property type="project" value="GO_Central"/>
</dbReference>
<dbReference type="GO" id="GO:0070093">
    <property type="term" value="P:negative regulation of glucagon secretion"/>
    <property type="evidence" value="ECO:0000318"/>
    <property type="project" value="GO_Central"/>
</dbReference>
<dbReference type="GO" id="GO:0051464">
    <property type="term" value="P:positive regulation of cortisol secretion"/>
    <property type="evidence" value="ECO:0000318"/>
    <property type="project" value="GO_Central"/>
</dbReference>
<dbReference type="Gene3D" id="6.10.250.1920">
    <property type="match status" value="1"/>
</dbReference>
<dbReference type="InterPro" id="IPR018446">
    <property type="entry name" value="Corticotropin-releasing_fac_CS"/>
</dbReference>
<dbReference type="InterPro" id="IPR000187">
    <property type="entry name" value="CRF"/>
</dbReference>
<dbReference type="InterPro" id="IPR003620">
    <property type="entry name" value="Urocortin_CRF"/>
</dbReference>
<dbReference type="PANTHER" id="PTHR15035:SF9">
    <property type="entry name" value="CORTICOLIBERIN"/>
    <property type="match status" value="1"/>
</dbReference>
<dbReference type="PANTHER" id="PTHR15035">
    <property type="entry name" value="CORTICOLIBERIN/UROCORTIN"/>
    <property type="match status" value="1"/>
</dbReference>
<dbReference type="Pfam" id="PF00473">
    <property type="entry name" value="CRF"/>
    <property type="match status" value="1"/>
</dbReference>
<dbReference type="PRINTS" id="PR01612">
    <property type="entry name" value="CRFFAMILY"/>
</dbReference>
<dbReference type="SMART" id="SM00039">
    <property type="entry name" value="CRF"/>
    <property type="match status" value="1"/>
</dbReference>
<dbReference type="PROSITE" id="PS00511">
    <property type="entry name" value="CRF"/>
    <property type="match status" value="1"/>
</dbReference>
<name>CRF_BOVIN</name>
<organism>
    <name type="scientific">Bos taurus</name>
    <name type="common">Bovine</name>
    <dbReference type="NCBI Taxonomy" id="9913"/>
    <lineage>
        <taxon>Eukaryota</taxon>
        <taxon>Metazoa</taxon>
        <taxon>Chordata</taxon>
        <taxon>Craniata</taxon>
        <taxon>Vertebrata</taxon>
        <taxon>Euteleostomi</taxon>
        <taxon>Mammalia</taxon>
        <taxon>Eutheria</taxon>
        <taxon>Laurasiatheria</taxon>
        <taxon>Artiodactyla</taxon>
        <taxon>Ruminantia</taxon>
        <taxon>Pecora</taxon>
        <taxon>Bovidae</taxon>
        <taxon>Bovinae</taxon>
        <taxon>Bos</taxon>
    </lineage>
</organism>
<sequence>MRLRLLVSVGVLLVALLPSPPCRALLSRGPIPGARQASQHPQPLSFFQPPPQPQEPQALPTLLRVGEEYFLRLGNLDETRAAPLSPAASPLASRSSSRLSPDKVAANFFRALLQPRRPFDSPAGPAERGTENALGSRQEAPAARKRRSQEPPISLDLTFHLLREVLEMTKADQLAQQAHNNRKLLDIAGK</sequence>
<accession>Q95MI6</accession>
<accession>A6QL82</accession>
<keyword id="KW-0027">Amidation</keyword>
<keyword id="KW-0165">Cleavage on pair of basic residues</keyword>
<keyword id="KW-0372">Hormone</keyword>
<keyword id="KW-1185">Reference proteome</keyword>
<keyword id="KW-0964">Secreted</keyword>
<keyword id="KW-0732">Signal</keyword>
<reference key="1">
    <citation type="journal article" date="2005" name="Anim. Genet.">
        <title>Single nucleotide polymorphisms in the corticotrophin-releasing hormone and pro-opiomelancortin genes are associated with growth and carcass yield in beef cattle.</title>
        <authorList>
            <person name="Buchanan F.C."/>
            <person name="Thue T.D."/>
            <person name="Yu P."/>
            <person name="Winkelman-Sim D.C."/>
        </authorList>
    </citation>
    <scope>NUCLEOTIDE SEQUENCE [GENOMIC DNA]</scope>
    <scope>VARIANTS PRO-4; ASN-45 AND HIS-77</scope>
</reference>
<reference key="2">
    <citation type="submission" date="2007-06" db="EMBL/GenBank/DDBJ databases">
        <authorList>
            <consortium name="NIH - Mammalian Gene Collection (MGC) project"/>
        </authorList>
    </citation>
    <scope>NUCLEOTIDE SEQUENCE [LARGE SCALE MRNA]</scope>
    <source>
        <strain>Hereford</strain>
        <tissue>Hypothalamus</tissue>
    </source>
</reference>
<feature type="signal peptide" evidence="5">
    <location>
        <begin position="1"/>
        <end position="24"/>
    </location>
</feature>
<feature type="propeptide" id="PRO_0000006208" evidence="1">
    <location>
        <begin position="25"/>
        <end position="147"/>
    </location>
</feature>
<feature type="peptide" id="PRO_0000006209" description="Corticoliberin">
    <location>
        <begin position="148"/>
        <end position="188"/>
    </location>
</feature>
<feature type="region of interest" description="Disordered" evidence="6">
    <location>
        <begin position="33"/>
        <end position="57"/>
    </location>
</feature>
<feature type="region of interest" description="Disordered" evidence="6">
    <location>
        <begin position="116"/>
        <end position="151"/>
    </location>
</feature>
<feature type="modified residue" description="Alanine amide" evidence="1">
    <location>
        <position position="188"/>
    </location>
</feature>
<feature type="sequence variant" evidence="7">
    <original>R</original>
    <variation>P</variation>
    <location>
        <position position="4"/>
    </location>
</feature>
<feature type="sequence variant" evidence="7">
    <original>S</original>
    <variation>N</variation>
    <location>
        <position position="45"/>
    </location>
</feature>
<feature type="sequence variant" evidence="7">
    <original>D</original>
    <variation>H</variation>
    <location>
        <position position="77"/>
    </location>
</feature>